<reference key="1">
    <citation type="journal article" date="2003" name="Proc. Natl. Acad. Sci. U.S.A.">
        <title>The genome sequence of Clostridium tetani, the causative agent of tetanus disease.</title>
        <authorList>
            <person name="Brueggemann H."/>
            <person name="Baeumer S."/>
            <person name="Fricke W.F."/>
            <person name="Wiezer A."/>
            <person name="Liesegang H."/>
            <person name="Decker I."/>
            <person name="Herzberg C."/>
            <person name="Martinez-Arias R."/>
            <person name="Merkl R."/>
            <person name="Henne A."/>
            <person name="Gottschalk G."/>
        </authorList>
    </citation>
    <scope>NUCLEOTIDE SEQUENCE [LARGE SCALE GENOMIC DNA]</scope>
    <source>
        <strain>Massachusetts / E88</strain>
    </source>
</reference>
<evidence type="ECO:0000255" key="1">
    <source>
        <dbReference type="HAMAP-Rule" id="MF_01315"/>
    </source>
</evidence>
<evidence type="ECO:0000256" key="2">
    <source>
        <dbReference type="SAM" id="MobiDB-lite"/>
    </source>
</evidence>
<evidence type="ECO:0000305" key="3"/>
<accession>Q890Q7</accession>
<dbReference type="EMBL" id="AE015927">
    <property type="protein sequence ID" value="AAO37038.1"/>
    <property type="molecule type" value="Genomic_DNA"/>
</dbReference>
<dbReference type="RefSeq" id="WP_011100699.1">
    <property type="nucleotide sequence ID" value="NC_004557.1"/>
</dbReference>
<dbReference type="SMR" id="Q890Q7"/>
<dbReference type="STRING" id="212717.CTC_02581"/>
<dbReference type="GeneID" id="24254716"/>
<dbReference type="KEGG" id="ctc:CTC_02581"/>
<dbReference type="HOGENOM" id="CLU_103849_1_2_9"/>
<dbReference type="OrthoDB" id="9803610at2"/>
<dbReference type="Proteomes" id="UP000001412">
    <property type="component" value="Chromosome"/>
</dbReference>
<dbReference type="GO" id="GO:0005829">
    <property type="term" value="C:cytosol"/>
    <property type="evidence" value="ECO:0007669"/>
    <property type="project" value="TreeGrafter"/>
</dbReference>
<dbReference type="GO" id="GO:0015935">
    <property type="term" value="C:small ribosomal subunit"/>
    <property type="evidence" value="ECO:0007669"/>
    <property type="project" value="TreeGrafter"/>
</dbReference>
<dbReference type="GO" id="GO:0019843">
    <property type="term" value="F:rRNA binding"/>
    <property type="evidence" value="ECO:0007669"/>
    <property type="project" value="UniProtKB-UniRule"/>
</dbReference>
<dbReference type="GO" id="GO:0003735">
    <property type="term" value="F:structural constituent of ribosome"/>
    <property type="evidence" value="ECO:0007669"/>
    <property type="project" value="InterPro"/>
</dbReference>
<dbReference type="GO" id="GO:0000049">
    <property type="term" value="F:tRNA binding"/>
    <property type="evidence" value="ECO:0007669"/>
    <property type="project" value="UniProtKB-UniRule"/>
</dbReference>
<dbReference type="GO" id="GO:0006412">
    <property type="term" value="P:translation"/>
    <property type="evidence" value="ECO:0007669"/>
    <property type="project" value="UniProtKB-UniRule"/>
</dbReference>
<dbReference type="FunFam" id="1.10.8.50:FF:000001">
    <property type="entry name" value="30S ribosomal protein S13"/>
    <property type="match status" value="1"/>
</dbReference>
<dbReference type="FunFam" id="4.10.910.10:FF:000001">
    <property type="entry name" value="30S ribosomal protein S13"/>
    <property type="match status" value="1"/>
</dbReference>
<dbReference type="Gene3D" id="1.10.8.50">
    <property type="match status" value="1"/>
</dbReference>
<dbReference type="Gene3D" id="4.10.910.10">
    <property type="entry name" value="30s ribosomal protein s13, domain 2"/>
    <property type="match status" value="1"/>
</dbReference>
<dbReference type="HAMAP" id="MF_01315">
    <property type="entry name" value="Ribosomal_uS13"/>
    <property type="match status" value="1"/>
</dbReference>
<dbReference type="InterPro" id="IPR027437">
    <property type="entry name" value="Rbsml_uS13_C"/>
</dbReference>
<dbReference type="InterPro" id="IPR001892">
    <property type="entry name" value="Ribosomal_uS13"/>
</dbReference>
<dbReference type="InterPro" id="IPR010979">
    <property type="entry name" value="Ribosomal_uS13-like_H2TH"/>
</dbReference>
<dbReference type="InterPro" id="IPR019980">
    <property type="entry name" value="Ribosomal_uS13_bac-type"/>
</dbReference>
<dbReference type="InterPro" id="IPR018269">
    <property type="entry name" value="Ribosomal_uS13_CS"/>
</dbReference>
<dbReference type="NCBIfam" id="TIGR03631">
    <property type="entry name" value="uS13_bact"/>
    <property type="match status" value="1"/>
</dbReference>
<dbReference type="PANTHER" id="PTHR10871">
    <property type="entry name" value="30S RIBOSOMAL PROTEIN S13/40S RIBOSOMAL PROTEIN S18"/>
    <property type="match status" value="1"/>
</dbReference>
<dbReference type="PANTHER" id="PTHR10871:SF1">
    <property type="entry name" value="SMALL RIBOSOMAL SUBUNIT PROTEIN US13M"/>
    <property type="match status" value="1"/>
</dbReference>
<dbReference type="Pfam" id="PF00416">
    <property type="entry name" value="Ribosomal_S13"/>
    <property type="match status" value="1"/>
</dbReference>
<dbReference type="PIRSF" id="PIRSF002134">
    <property type="entry name" value="Ribosomal_S13"/>
    <property type="match status" value="1"/>
</dbReference>
<dbReference type="SUPFAM" id="SSF46946">
    <property type="entry name" value="S13-like H2TH domain"/>
    <property type="match status" value="1"/>
</dbReference>
<dbReference type="PROSITE" id="PS00646">
    <property type="entry name" value="RIBOSOMAL_S13_1"/>
    <property type="match status" value="1"/>
</dbReference>
<dbReference type="PROSITE" id="PS50159">
    <property type="entry name" value="RIBOSOMAL_S13_2"/>
    <property type="match status" value="1"/>
</dbReference>
<protein>
    <recommendedName>
        <fullName evidence="1">Small ribosomal subunit protein uS13</fullName>
    </recommendedName>
    <alternativeName>
        <fullName evidence="3">30S ribosomal protein S13</fullName>
    </alternativeName>
</protein>
<feature type="chain" id="PRO_0000132084" description="Small ribosomal subunit protein uS13">
    <location>
        <begin position="1"/>
        <end position="123"/>
    </location>
</feature>
<feature type="region of interest" description="Disordered" evidence="2">
    <location>
        <begin position="92"/>
        <end position="123"/>
    </location>
</feature>
<gene>
    <name evidence="1" type="primary">rpsM</name>
    <name type="ordered locus">CTC_02581</name>
</gene>
<organism>
    <name type="scientific">Clostridium tetani (strain Massachusetts / E88)</name>
    <dbReference type="NCBI Taxonomy" id="212717"/>
    <lineage>
        <taxon>Bacteria</taxon>
        <taxon>Bacillati</taxon>
        <taxon>Bacillota</taxon>
        <taxon>Clostridia</taxon>
        <taxon>Eubacteriales</taxon>
        <taxon>Clostridiaceae</taxon>
        <taxon>Clostridium</taxon>
    </lineage>
</organism>
<sequence length="123" mass="14046">MARIAGIDLPREKRVEVGLTYIFGIGTSSAKKILKETGVNPDIRIKDLSEEEVNLLRDYINQNLKVEGDLRRDVALDIKRLKEIGSYRGIRHRRGLPVRGQKTKTNARTRKGPKKLVVSRKKK</sequence>
<keyword id="KW-1185">Reference proteome</keyword>
<keyword id="KW-0687">Ribonucleoprotein</keyword>
<keyword id="KW-0689">Ribosomal protein</keyword>
<keyword id="KW-0694">RNA-binding</keyword>
<keyword id="KW-0699">rRNA-binding</keyword>
<keyword id="KW-0820">tRNA-binding</keyword>
<proteinExistence type="inferred from homology"/>
<comment type="function">
    <text evidence="1">Located at the top of the head of the 30S subunit, it contacts several helices of the 16S rRNA. In the 70S ribosome it contacts the 23S rRNA (bridge B1a) and protein L5 of the 50S subunit (bridge B1b), connecting the 2 subunits; these bridges are implicated in subunit movement. Contacts the tRNAs in the A and P-sites.</text>
</comment>
<comment type="subunit">
    <text evidence="1">Part of the 30S ribosomal subunit. Forms a loose heterodimer with protein S19. Forms two bridges to the 50S subunit in the 70S ribosome.</text>
</comment>
<comment type="similarity">
    <text evidence="1">Belongs to the universal ribosomal protein uS13 family.</text>
</comment>
<name>RS13_CLOTE</name>